<accession>C6DB39</accession>
<gene>
    <name evidence="1" type="primary">xseB</name>
    <name type="ordered locus">PC1_1032</name>
</gene>
<feature type="chain" id="PRO_1000205229" description="Exodeoxyribonuclease 7 small subunit">
    <location>
        <begin position="1"/>
        <end position="82"/>
    </location>
</feature>
<evidence type="ECO:0000255" key="1">
    <source>
        <dbReference type="HAMAP-Rule" id="MF_00337"/>
    </source>
</evidence>
<proteinExistence type="inferred from homology"/>
<organism>
    <name type="scientific">Pectobacterium carotovorum subsp. carotovorum (strain PC1)</name>
    <dbReference type="NCBI Taxonomy" id="561230"/>
    <lineage>
        <taxon>Bacteria</taxon>
        <taxon>Pseudomonadati</taxon>
        <taxon>Pseudomonadota</taxon>
        <taxon>Gammaproteobacteria</taxon>
        <taxon>Enterobacterales</taxon>
        <taxon>Pectobacteriaceae</taxon>
        <taxon>Pectobacterium</taxon>
    </lineage>
</organism>
<name>EX7S_PECCP</name>
<sequence>MPKKTEQPVSFESSLNELEKIVTRLESGELPLDDALNEFEHGIQLARQGQQKLQQAEQRVQILLSDDPDAPLSPFTPDNDAL</sequence>
<protein>
    <recommendedName>
        <fullName evidence="1">Exodeoxyribonuclease 7 small subunit</fullName>
        <ecNumber evidence="1">3.1.11.6</ecNumber>
    </recommendedName>
    <alternativeName>
        <fullName evidence="1">Exodeoxyribonuclease VII small subunit</fullName>
        <shortName evidence="1">Exonuclease VII small subunit</shortName>
    </alternativeName>
</protein>
<comment type="function">
    <text evidence="1">Bidirectionally degrades single-stranded DNA into large acid-insoluble oligonucleotides, which are then degraded further into small acid-soluble oligonucleotides.</text>
</comment>
<comment type="catalytic activity">
    <reaction evidence="1">
        <text>Exonucleolytic cleavage in either 5'- to 3'- or 3'- to 5'-direction to yield nucleoside 5'-phosphates.</text>
        <dbReference type="EC" id="3.1.11.6"/>
    </reaction>
</comment>
<comment type="subunit">
    <text evidence="1">Heterooligomer composed of large and small subunits.</text>
</comment>
<comment type="subcellular location">
    <subcellularLocation>
        <location evidence="1">Cytoplasm</location>
    </subcellularLocation>
</comment>
<comment type="similarity">
    <text evidence="1">Belongs to the XseB family.</text>
</comment>
<keyword id="KW-0963">Cytoplasm</keyword>
<keyword id="KW-0269">Exonuclease</keyword>
<keyword id="KW-0378">Hydrolase</keyword>
<keyword id="KW-0540">Nuclease</keyword>
<reference key="1">
    <citation type="submission" date="2009-07" db="EMBL/GenBank/DDBJ databases">
        <title>Complete sequence of Pectobacterium carotovorum subsp. carotovorum PC1.</title>
        <authorList>
            <consortium name="US DOE Joint Genome Institute"/>
            <person name="Lucas S."/>
            <person name="Copeland A."/>
            <person name="Lapidus A."/>
            <person name="Glavina del Rio T."/>
            <person name="Tice H."/>
            <person name="Bruce D."/>
            <person name="Goodwin L."/>
            <person name="Pitluck S."/>
            <person name="Munk A.C."/>
            <person name="Brettin T."/>
            <person name="Detter J.C."/>
            <person name="Han C."/>
            <person name="Tapia R."/>
            <person name="Larimer F."/>
            <person name="Land M."/>
            <person name="Hauser L."/>
            <person name="Kyrpides N."/>
            <person name="Mikhailova N."/>
            <person name="Balakrishnan V."/>
            <person name="Glasner J."/>
            <person name="Perna N.T."/>
        </authorList>
    </citation>
    <scope>NUCLEOTIDE SEQUENCE [LARGE SCALE GENOMIC DNA]</scope>
    <source>
        <strain>PC1</strain>
    </source>
</reference>
<dbReference type="EC" id="3.1.11.6" evidence="1"/>
<dbReference type="EMBL" id="CP001657">
    <property type="protein sequence ID" value="ACT12081.1"/>
    <property type="molecule type" value="Genomic_DNA"/>
</dbReference>
<dbReference type="RefSeq" id="WP_012773714.1">
    <property type="nucleotide sequence ID" value="NC_012917.1"/>
</dbReference>
<dbReference type="SMR" id="C6DB39"/>
<dbReference type="STRING" id="561230.PC1_1032"/>
<dbReference type="GeneID" id="67795192"/>
<dbReference type="KEGG" id="pct:PC1_1032"/>
<dbReference type="eggNOG" id="COG1722">
    <property type="taxonomic scope" value="Bacteria"/>
</dbReference>
<dbReference type="HOGENOM" id="CLU_145918_3_3_6"/>
<dbReference type="OrthoDB" id="5591562at2"/>
<dbReference type="Proteomes" id="UP000002736">
    <property type="component" value="Chromosome"/>
</dbReference>
<dbReference type="GO" id="GO:0005829">
    <property type="term" value="C:cytosol"/>
    <property type="evidence" value="ECO:0007669"/>
    <property type="project" value="TreeGrafter"/>
</dbReference>
<dbReference type="GO" id="GO:0009318">
    <property type="term" value="C:exodeoxyribonuclease VII complex"/>
    <property type="evidence" value="ECO:0007669"/>
    <property type="project" value="InterPro"/>
</dbReference>
<dbReference type="GO" id="GO:0008855">
    <property type="term" value="F:exodeoxyribonuclease VII activity"/>
    <property type="evidence" value="ECO:0007669"/>
    <property type="project" value="UniProtKB-UniRule"/>
</dbReference>
<dbReference type="GO" id="GO:0006308">
    <property type="term" value="P:DNA catabolic process"/>
    <property type="evidence" value="ECO:0007669"/>
    <property type="project" value="UniProtKB-UniRule"/>
</dbReference>
<dbReference type="FunFam" id="1.10.287.1040:FF:000001">
    <property type="entry name" value="Exodeoxyribonuclease 7 small subunit"/>
    <property type="match status" value="1"/>
</dbReference>
<dbReference type="Gene3D" id="1.10.287.1040">
    <property type="entry name" value="Exonuclease VII, small subunit"/>
    <property type="match status" value="1"/>
</dbReference>
<dbReference type="HAMAP" id="MF_00337">
    <property type="entry name" value="Exonuc_7_S"/>
    <property type="match status" value="1"/>
</dbReference>
<dbReference type="InterPro" id="IPR003761">
    <property type="entry name" value="Exonuc_VII_S"/>
</dbReference>
<dbReference type="InterPro" id="IPR037004">
    <property type="entry name" value="Exonuc_VII_ssu_sf"/>
</dbReference>
<dbReference type="NCBIfam" id="NF002137">
    <property type="entry name" value="PRK00977.1-1"/>
    <property type="match status" value="1"/>
</dbReference>
<dbReference type="NCBIfam" id="NF002140">
    <property type="entry name" value="PRK00977.1-4"/>
    <property type="match status" value="1"/>
</dbReference>
<dbReference type="NCBIfam" id="TIGR01280">
    <property type="entry name" value="xseB"/>
    <property type="match status" value="1"/>
</dbReference>
<dbReference type="PANTHER" id="PTHR34137">
    <property type="entry name" value="EXODEOXYRIBONUCLEASE 7 SMALL SUBUNIT"/>
    <property type="match status" value="1"/>
</dbReference>
<dbReference type="PANTHER" id="PTHR34137:SF1">
    <property type="entry name" value="EXODEOXYRIBONUCLEASE 7 SMALL SUBUNIT"/>
    <property type="match status" value="1"/>
</dbReference>
<dbReference type="Pfam" id="PF02609">
    <property type="entry name" value="Exonuc_VII_S"/>
    <property type="match status" value="1"/>
</dbReference>
<dbReference type="PIRSF" id="PIRSF006488">
    <property type="entry name" value="Exonuc_VII_S"/>
    <property type="match status" value="1"/>
</dbReference>
<dbReference type="SUPFAM" id="SSF116842">
    <property type="entry name" value="XseB-like"/>
    <property type="match status" value="1"/>
</dbReference>